<dbReference type="EMBL" id="EF489041">
    <property type="protein sequence ID" value="ABO36727.1"/>
    <property type="molecule type" value="Genomic_DNA"/>
</dbReference>
<dbReference type="RefSeq" id="YP_001109524.1">
    <property type="nucleotide sequence ID" value="NC_009143.1"/>
</dbReference>
<dbReference type="SMR" id="A4GYT3"/>
<dbReference type="FunCoup" id="A4GYT3">
    <property type="interactions" value="1482"/>
</dbReference>
<dbReference type="STRING" id="3694.A4GYT3"/>
<dbReference type="GeneID" id="4929694"/>
<dbReference type="KEGG" id="pop:4929694"/>
<dbReference type="InParanoid" id="A4GYT3"/>
<dbReference type="OrthoDB" id="21463at2759"/>
<dbReference type="Proteomes" id="UP000006729">
    <property type="component" value="Chloroplast"/>
</dbReference>
<dbReference type="GO" id="GO:0009507">
    <property type="term" value="C:chloroplast"/>
    <property type="evidence" value="ECO:0007669"/>
    <property type="project" value="UniProtKB-SubCell"/>
</dbReference>
<dbReference type="GO" id="GO:0005763">
    <property type="term" value="C:mitochondrial small ribosomal subunit"/>
    <property type="evidence" value="ECO:0000318"/>
    <property type="project" value="GO_Central"/>
</dbReference>
<dbReference type="GO" id="GO:0070181">
    <property type="term" value="F:small ribosomal subunit rRNA binding"/>
    <property type="evidence" value="ECO:0000318"/>
    <property type="project" value="GO_Central"/>
</dbReference>
<dbReference type="GO" id="GO:0003735">
    <property type="term" value="F:structural constituent of ribosome"/>
    <property type="evidence" value="ECO:0000318"/>
    <property type="project" value="GO_Central"/>
</dbReference>
<dbReference type="GO" id="GO:0006412">
    <property type="term" value="P:translation"/>
    <property type="evidence" value="ECO:0000318"/>
    <property type="project" value="GO_Central"/>
</dbReference>
<dbReference type="FunFam" id="4.10.640.10:FF:000002">
    <property type="entry name" value="30S ribosomal protein S18, chloroplastic"/>
    <property type="match status" value="1"/>
</dbReference>
<dbReference type="Gene3D" id="4.10.640.10">
    <property type="entry name" value="Ribosomal protein S18"/>
    <property type="match status" value="1"/>
</dbReference>
<dbReference type="HAMAP" id="MF_00270">
    <property type="entry name" value="Ribosomal_bS18"/>
    <property type="match status" value="1"/>
</dbReference>
<dbReference type="InterPro" id="IPR001648">
    <property type="entry name" value="Ribosomal_bS18"/>
</dbReference>
<dbReference type="InterPro" id="IPR018275">
    <property type="entry name" value="Ribosomal_bS18_CS"/>
</dbReference>
<dbReference type="InterPro" id="IPR036870">
    <property type="entry name" value="Ribosomal_bS18_sf"/>
</dbReference>
<dbReference type="NCBIfam" id="TIGR00165">
    <property type="entry name" value="S18"/>
    <property type="match status" value="1"/>
</dbReference>
<dbReference type="PANTHER" id="PTHR13479">
    <property type="entry name" value="30S RIBOSOMAL PROTEIN S18"/>
    <property type="match status" value="1"/>
</dbReference>
<dbReference type="PANTHER" id="PTHR13479:SF40">
    <property type="entry name" value="SMALL RIBOSOMAL SUBUNIT PROTEIN BS18M"/>
    <property type="match status" value="1"/>
</dbReference>
<dbReference type="Pfam" id="PF01084">
    <property type="entry name" value="Ribosomal_S18"/>
    <property type="match status" value="1"/>
</dbReference>
<dbReference type="PRINTS" id="PR00974">
    <property type="entry name" value="RIBOSOMALS18"/>
</dbReference>
<dbReference type="SUPFAM" id="SSF46911">
    <property type="entry name" value="Ribosomal protein S18"/>
    <property type="match status" value="1"/>
</dbReference>
<dbReference type="PROSITE" id="PS00057">
    <property type="entry name" value="RIBOSOMAL_S18"/>
    <property type="match status" value="1"/>
</dbReference>
<accession>A4GYT3</accession>
<sequence length="101" mass="11962">MDKSKRLFLKPKRSLRRRLPPIGSGDRIDYRNMSLISRFISEQGKILSRRVNRLTLKQQRLITIAIKQARILSSLPFLNNERQFEKNELVARTTGLRTRKK</sequence>
<reference key="1">
    <citation type="journal article" date="2006" name="Science">
        <title>The genome of black cottonwood, Populus trichocarpa (Torr. &amp; Gray).</title>
        <authorList>
            <person name="Tuskan G.A."/>
            <person name="Difazio S."/>
            <person name="Jansson S."/>
            <person name="Bohlmann J."/>
            <person name="Grigoriev I."/>
            <person name="Hellsten U."/>
            <person name="Putnam N."/>
            <person name="Ralph S."/>
            <person name="Rombauts S."/>
            <person name="Salamov A."/>
            <person name="Schein J."/>
            <person name="Sterck L."/>
            <person name="Aerts A."/>
            <person name="Bhalerao R.R."/>
            <person name="Bhalerao R.P."/>
            <person name="Blaudez D."/>
            <person name="Boerjan W."/>
            <person name="Brun A."/>
            <person name="Brunner A."/>
            <person name="Busov V."/>
            <person name="Campbell M."/>
            <person name="Carlson J."/>
            <person name="Chalot M."/>
            <person name="Chapman J."/>
            <person name="Chen G.-L."/>
            <person name="Cooper D."/>
            <person name="Coutinho P.M."/>
            <person name="Couturier J."/>
            <person name="Covert S."/>
            <person name="Cronk Q."/>
            <person name="Cunningham R."/>
            <person name="Davis J."/>
            <person name="Degroeve S."/>
            <person name="Dejardin A."/>
            <person name="dePamphilis C.W."/>
            <person name="Detter J."/>
            <person name="Dirks B."/>
            <person name="Dubchak I."/>
            <person name="Duplessis S."/>
            <person name="Ehlting J."/>
            <person name="Ellis B."/>
            <person name="Gendler K."/>
            <person name="Goodstein D."/>
            <person name="Gribskov M."/>
            <person name="Grimwood J."/>
            <person name="Groover A."/>
            <person name="Gunter L."/>
            <person name="Hamberger B."/>
            <person name="Heinze B."/>
            <person name="Helariutta Y."/>
            <person name="Henrissat B."/>
            <person name="Holligan D."/>
            <person name="Holt R."/>
            <person name="Huang W."/>
            <person name="Islam-Faridi N."/>
            <person name="Jones S."/>
            <person name="Jones-Rhoades M."/>
            <person name="Jorgensen R."/>
            <person name="Joshi C."/>
            <person name="Kangasjaervi J."/>
            <person name="Karlsson J."/>
            <person name="Kelleher C."/>
            <person name="Kirkpatrick R."/>
            <person name="Kirst M."/>
            <person name="Kohler A."/>
            <person name="Kalluri U."/>
            <person name="Larimer F."/>
            <person name="Leebens-Mack J."/>
            <person name="Leple J.-C."/>
            <person name="Locascio P."/>
            <person name="Lou Y."/>
            <person name="Lucas S."/>
            <person name="Martin F."/>
            <person name="Montanini B."/>
            <person name="Napoli C."/>
            <person name="Nelson D.R."/>
            <person name="Nelson C."/>
            <person name="Nieminen K."/>
            <person name="Nilsson O."/>
            <person name="Pereda V."/>
            <person name="Peter G."/>
            <person name="Philippe R."/>
            <person name="Pilate G."/>
            <person name="Poliakov A."/>
            <person name="Razumovskaya J."/>
            <person name="Richardson P."/>
            <person name="Rinaldi C."/>
            <person name="Ritland K."/>
            <person name="Rouze P."/>
            <person name="Ryaboy D."/>
            <person name="Schmutz J."/>
            <person name="Schrader J."/>
            <person name="Segerman B."/>
            <person name="Shin H."/>
            <person name="Siddiqui A."/>
            <person name="Sterky F."/>
            <person name="Terry A."/>
            <person name="Tsai C.-J."/>
            <person name="Uberbacher E."/>
            <person name="Unneberg P."/>
            <person name="Vahala J."/>
            <person name="Wall K."/>
            <person name="Wessler S."/>
            <person name="Yang G."/>
            <person name="Yin T."/>
            <person name="Douglas C."/>
            <person name="Marra M."/>
            <person name="Sandberg G."/>
            <person name="Van de Peer Y."/>
            <person name="Rokhsar D.S."/>
        </authorList>
    </citation>
    <scope>NUCLEOTIDE SEQUENCE [LARGE SCALE GENOMIC DNA]</scope>
    <source>
        <strain>cv. Nisqually</strain>
    </source>
</reference>
<evidence type="ECO:0000255" key="1">
    <source>
        <dbReference type="HAMAP-Rule" id="MF_00270"/>
    </source>
</evidence>
<evidence type="ECO:0000305" key="2"/>
<organism>
    <name type="scientific">Populus trichocarpa</name>
    <name type="common">Western balsam poplar</name>
    <name type="synonym">Populus balsamifera subsp. trichocarpa</name>
    <dbReference type="NCBI Taxonomy" id="3694"/>
    <lineage>
        <taxon>Eukaryota</taxon>
        <taxon>Viridiplantae</taxon>
        <taxon>Streptophyta</taxon>
        <taxon>Embryophyta</taxon>
        <taxon>Tracheophyta</taxon>
        <taxon>Spermatophyta</taxon>
        <taxon>Magnoliopsida</taxon>
        <taxon>eudicotyledons</taxon>
        <taxon>Gunneridae</taxon>
        <taxon>Pentapetalae</taxon>
        <taxon>rosids</taxon>
        <taxon>fabids</taxon>
        <taxon>Malpighiales</taxon>
        <taxon>Salicaceae</taxon>
        <taxon>Saliceae</taxon>
        <taxon>Populus</taxon>
    </lineage>
</organism>
<gene>
    <name evidence="1" type="primary">rps18</name>
    <name type="ordered locus">Poptr_cp045</name>
</gene>
<proteinExistence type="inferred from homology"/>
<comment type="subunit">
    <text evidence="1">Part of the 30S ribosomal subunit.</text>
</comment>
<comment type="subcellular location">
    <subcellularLocation>
        <location>Plastid</location>
        <location>Chloroplast</location>
    </subcellularLocation>
</comment>
<comment type="similarity">
    <text evidence="1">Belongs to the bacterial ribosomal protein bS18 family.</text>
</comment>
<geneLocation type="chloroplast"/>
<protein>
    <recommendedName>
        <fullName evidence="1">Small ribosomal subunit protein bS18c</fullName>
    </recommendedName>
    <alternativeName>
        <fullName evidence="2">30S ribosomal protein S18, chloroplastic</fullName>
    </alternativeName>
</protein>
<feature type="chain" id="PRO_0000345605" description="Small ribosomal subunit protein bS18c">
    <location>
        <begin position="1"/>
        <end position="101"/>
    </location>
</feature>
<keyword id="KW-0150">Chloroplast</keyword>
<keyword id="KW-0934">Plastid</keyword>
<keyword id="KW-1185">Reference proteome</keyword>
<keyword id="KW-0687">Ribonucleoprotein</keyword>
<keyword id="KW-0689">Ribosomal protein</keyword>
<keyword id="KW-0694">RNA-binding</keyword>
<keyword id="KW-0699">rRNA-binding</keyword>
<name>RR18_POPTR</name>